<sequence>MTNGISILPHTQPVYGDAAVAAMAERVVGALGPAVVSHAIAFGELTLVVQASDIVYALTYLRDDPACAFRNFIDICGVDYPQREKRFDVVYHLLSLRHNLRIRLKVQTDEVTPVPSVIEVFPAANWYERETYDLYGILFSGHPDLRRLLTDYGFEGHPLRKDFPLTGFVEVRYDQDQARVVYEPVQLTQEFRNFDFLSPWEGTDYVLPGDEKTSA</sequence>
<proteinExistence type="inferred from homology"/>
<evidence type="ECO:0000255" key="1">
    <source>
        <dbReference type="HAMAP-Rule" id="MF_01357"/>
    </source>
</evidence>
<gene>
    <name evidence="1" type="primary">nuoC</name>
    <name type="ordered locus">Mrad2831_2058</name>
</gene>
<organism>
    <name type="scientific">Methylobacterium radiotolerans (strain ATCC 27329 / DSM 1819 / JCM 2831 / NBRC 15690 / NCIMB 10815 / 0-1)</name>
    <dbReference type="NCBI Taxonomy" id="426355"/>
    <lineage>
        <taxon>Bacteria</taxon>
        <taxon>Pseudomonadati</taxon>
        <taxon>Pseudomonadota</taxon>
        <taxon>Alphaproteobacteria</taxon>
        <taxon>Hyphomicrobiales</taxon>
        <taxon>Methylobacteriaceae</taxon>
        <taxon>Methylobacterium</taxon>
    </lineage>
</organism>
<comment type="function">
    <text evidence="1">NDH-1 shuttles electrons from NADH, via FMN and iron-sulfur (Fe-S) centers, to quinones in the respiratory chain. The immediate electron acceptor for the enzyme in this species is believed to be ubiquinone. Couples the redox reaction to proton translocation (for every two electrons transferred, four hydrogen ions are translocated across the cytoplasmic membrane), and thus conserves the redox energy in a proton gradient.</text>
</comment>
<comment type="catalytic activity">
    <reaction evidence="1">
        <text>a quinone + NADH + 5 H(+)(in) = a quinol + NAD(+) + 4 H(+)(out)</text>
        <dbReference type="Rhea" id="RHEA:57888"/>
        <dbReference type="ChEBI" id="CHEBI:15378"/>
        <dbReference type="ChEBI" id="CHEBI:24646"/>
        <dbReference type="ChEBI" id="CHEBI:57540"/>
        <dbReference type="ChEBI" id="CHEBI:57945"/>
        <dbReference type="ChEBI" id="CHEBI:132124"/>
    </reaction>
</comment>
<comment type="subunit">
    <text evidence="1">NDH-1 is composed of 14 different subunits. Subunits NuoB, C, D, E, F, and G constitute the peripheral sector of the complex.</text>
</comment>
<comment type="subcellular location">
    <subcellularLocation>
        <location evidence="1">Cell inner membrane</location>
        <topology evidence="1">Peripheral membrane protein</topology>
        <orientation evidence="1">Cytoplasmic side</orientation>
    </subcellularLocation>
</comment>
<comment type="similarity">
    <text evidence="1">Belongs to the complex I 30 kDa subunit family.</text>
</comment>
<protein>
    <recommendedName>
        <fullName evidence="1">NADH-quinone oxidoreductase subunit C</fullName>
        <ecNumber evidence="1">7.1.1.-</ecNumber>
    </recommendedName>
    <alternativeName>
        <fullName evidence="1">NADH dehydrogenase I subunit C</fullName>
    </alternativeName>
    <alternativeName>
        <fullName evidence="1">NDH-1 subunit C</fullName>
    </alternativeName>
</protein>
<name>NUOC_METRJ</name>
<reference key="1">
    <citation type="submission" date="2008-03" db="EMBL/GenBank/DDBJ databases">
        <title>Complete sequence of chromosome of Methylobacterium radiotolerans JCM 2831.</title>
        <authorList>
            <consortium name="US DOE Joint Genome Institute"/>
            <person name="Copeland A."/>
            <person name="Lucas S."/>
            <person name="Lapidus A."/>
            <person name="Glavina del Rio T."/>
            <person name="Dalin E."/>
            <person name="Tice H."/>
            <person name="Bruce D."/>
            <person name="Goodwin L."/>
            <person name="Pitluck S."/>
            <person name="Kiss H."/>
            <person name="Brettin T."/>
            <person name="Detter J.C."/>
            <person name="Han C."/>
            <person name="Kuske C.R."/>
            <person name="Schmutz J."/>
            <person name="Larimer F."/>
            <person name="Land M."/>
            <person name="Hauser L."/>
            <person name="Kyrpides N."/>
            <person name="Mikhailova N."/>
            <person name="Marx C.J."/>
            <person name="Richardson P."/>
        </authorList>
    </citation>
    <scope>NUCLEOTIDE SEQUENCE [LARGE SCALE GENOMIC DNA]</scope>
    <source>
        <strain>ATCC 27329 / DSM 1819 / JCM 2831 / NBRC 15690 / NCIMB 10815 / 0-1</strain>
    </source>
</reference>
<keyword id="KW-0997">Cell inner membrane</keyword>
<keyword id="KW-1003">Cell membrane</keyword>
<keyword id="KW-0472">Membrane</keyword>
<keyword id="KW-0520">NAD</keyword>
<keyword id="KW-0874">Quinone</keyword>
<keyword id="KW-1278">Translocase</keyword>
<keyword id="KW-0813">Transport</keyword>
<keyword id="KW-0830">Ubiquinone</keyword>
<feature type="chain" id="PRO_0000358127" description="NADH-quinone oxidoreductase subunit C">
    <location>
        <begin position="1"/>
        <end position="215"/>
    </location>
</feature>
<accession>B1LUN5</accession>
<dbReference type="EC" id="7.1.1.-" evidence="1"/>
<dbReference type="EMBL" id="CP001001">
    <property type="protein sequence ID" value="ACB24053.1"/>
    <property type="molecule type" value="Genomic_DNA"/>
</dbReference>
<dbReference type="RefSeq" id="WP_012319035.1">
    <property type="nucleotide sequence ID" value="NC_010505.1"/>
</dbReference>
<dbReference type="SMR" id="B1LUN5"/>
<dbReference type="STRING" id="426355.Mrad2831_2058"/>
<dbReference type="GeneID" id="6138087"/>
<dbReference type="KEGG" id="mrd:Mrad2831_2058"/>
<dbReference type="eggNOG" id="COG0852">
    <property type="taxonomic scope" value="Bacteria"/>
</dbReference>
<dbReference type="HOGENOM" id="CLU_042628_2_1_5"/>
<dbReference type="OrthoDB" id="9803286at2"/>
<dbReference type="Proteomes" id="UP000006589">
    <property type="component" value="Chromosome"/>
</dbReference>
<dbReference type="GO" id="GO:0005886">
    <property type="term" value="C:plasma membrane"/>
    <property type="evidence" value="ECO:0007669"/>
    <property type="project" value="UniProtKB-SubCell"/>
</dbReference>
<dbReference type="GO" id="GO:0008137">
    <property type="term" value="F:NADH dehydrogenase (ubiquinone) activity"/>
    <property type="evidence" value="ECO:0007669"/>
    <property type="project" value="InterPro"/>
</dbReference>
<dbReference type="GO" id="GO:0050136">
    <property type="term" value="F:NADH:ubiquinone reductase (non-electrogenic) activity"/>
    <property type="evidence" value="ECO:0007669"/>
    <property type="project" value="UniProtKB-UniRule"/>
</dbReference>
<dbReference type="GO" id="GO:0048038">
    <property type="term" value="F:quinone binding"/>
    <property type="evidence" value="ECO:0007669"/>
    <property type="project" value="UniProtKB-KW"/>
</dbReference>
<dbReference type="Gene3D" id="3.30.460.80">
    <property type="entry name" value="NADH:ubiquinone oxidoreductase, 30kDa subunit"/>
    <property type="match status" value="1"/>
</dbReference>
<dbReference type="HAMAP" id="MF_01357">
    <property type="entry name" value="NDH1_NuoC"/>
    <property type="match status" value="1"/>
</dbReference>
<dbReference type="InterPro" id="IPR010218">
    <property type="entry name" value="NADH_DH_suC"/>
</dbReference>
<dbReference type="InterPro" id="IPR037232">
    <property type="entry name" value="NADH_quin_OxRdtase_su_C/D-like"/>
</dbReference>
<dbReference type="InterPro" id="IPR001268">
    <property type="entry name" value="NADH_UbQ_OxRdtase_30kDa_su"/>
</dbReference>
<dbReference type="InterPro" id="IPR020396">
    <property type="entry name" value="NADH_UbQ_OxRdtase_CS"/>
</dbReference>
<dbReference type="NCBIfam" id="TIGR01961">
    <property type="entry name" value="NuoC_fam"/>
    <property type="match status" value="1"/>
</dbReference>
<dbReference type="NCBIfam" id="NF004730">
    <property type="entry name" value="PRK06074.1-1"/>
    <property type="match status" value="1"/>
</dbReference>
<dbReference type="NCBIfam" id="NF004733">
    <property type="entry name" value="PRK06074.1-5"/>
    <property type="match status" value="1"/>
</dbReference>
<dbReference type="PANTHER" id="PTHR10884:SF14">
    <property type="entry name" value="NADH DEHYDROGENASE [UBIQUINONE] IRON-SULFUR PROTEIN 3, MITOCHONDRIAL"/>
    <property type="match status" value="1"/>
</dbReference>
<dbReference type="PANTHER" id="PTHR10884">
    <property type="entry name" value="NADH DEHYDROGENASE UBIQUINONE IRON-SULFUR PROTEIN 3"/>
    <property type="match status" value="1"/>
</dbReference>
<dbReference type="Pfam" id="PF00329">
    <property type="entry name" value="Complex1_30kDa"/>
    <property type="match status" value="1"/>
</dbReference>
<dbReference type="SUPFAM" id="SSF143243">
    <property type="entry name" value="Nqo5-like"/>
    <property type="match status" value="1"/>
</dbReference>
<dbReference type="PROSITE" id="PS00542">
    <property type="entry name" value="COMPLEX1_30K"/>
    <property type="match status" value="1"/>
</dbReference>